<feature type="chain" id="PRO_1000198227" description="UPF0297 protein BCAH820_4467">
    <location>
        <begin position="1"/>
        <end position="88"/>
    </location>
</feature>
<evidence type="ECO:0000255" key="1">
    <source>
        <dbReference type="HAMAP-Rule" id="MF_01507"/>
    </source>
</evidence>
<dbReference type="EMBL" id="CP001283">
    <property type="protein sequence ID" value="ACK88907.1"/>
    <property type="molecule type" value="Genomic_DNA"/>
</dbReference>
<dbReference type="RefSeq" id="WP_000348590.1">
    <property type="nucleotide sequence ID" value="NC_011773.1"/>
</dbReference>
<dbReference type="SMR" id="B7JPX3"/>
<dbReference type="KEGG" id="bcu:BCAH820_4467"/>
<dbReference type="HOGENOM" id="CLU_162466_0_0_9"/>
<dbReference type="Proteomes" id="UP000001363">
    <property type="component" value="Chromosome"/>
</dbReference>
<dbReference type="HAMAP" id="MF_01507">
    <property type="entry name" value="UPF0297"/>
    <property type="match status" value="1"/>
</dbReference>
<dbReference type="InterPro" id="IPR009309">
    <property type="entry name" value="IreB"/>
</dbReference>
<dbReference type="NCBIfam" id="NF003997">
    <property type="entry name" value="PRK05473.1"/>
    <property type="match status" value="1"/>
</dbReference>
<dbReference type="PANTHER" id="PTHR40067">
    <property type="entry name" value="UPF0297 PROTEIN YRZL"/>
    <property type="match status" value="1"/>
</dbReference>
<dbReference type="PANTHER" id="PTHR40067:SF1">
    <property type="entry name" value="UPF0297 PROTEIN YRZL"/>
    <property type="match status" value="1"/>
</dbReference>
<dbReference type="Pfam" id="PF06135">
    <property type="entry name" value="IreB"/>
    <property type="match status" value="1"/>
</dbReference>
<dbReference type="PIRSF" id="PIRSF037258">
    <property type="entry name" value="DUF965_bac"/>
    <property type="match status" value="1"/>
</dbReference>
<comment type="similarity">
    <text evidence="1">Belongs to the UPF0297 family.</text>
</comment>
<reference key="1">
    <citation type="submission" date="2008-10" db="EMBL/GenBank/DDBJ databases">
        <title>Genome sequence of Bacillus cereus AH820.</title>
        <authorList>
            <person name="Dodson R.J."/>
            <person name="Durkin A.S."/>
            <person name="Rosovitz M.J."/>
            <person name="Rasko D.A."/>
            <person name="Hoffmaster A."/>
            <person name="Ravel J."/>
            <person name="Sutton G."/>
        </authorList>
    </citation>
    <scope>NUCLEOTIDE SEQUENCE [LARGE SCALE GENOMIC DNA]</scope>
    <source>
        <strain>AH820</strain>
    </source>
</reference>
<sequence>MDGFDKTMKFSIQDEKQSVHVNDVLLTVYDALQEKGYNPINQIVGYLLSGDPAYIPRHKDARSIIRKLERDELIEELVKSYLKHHREE</sequence>
<proteinExistence type="inferred from homology"/>
<protein>
    <recommendedName>
        <fullName evidence="1">UPF0297 protein BCAH820_4467</fullName>
    </recommendedName>
</protein>
<accession>B7JPX3</accession>
<organism>
    <name type="scientific">Bacillus cereus (strain AH820)</name>
    <dbReference type="NCBI Taxonomy" id="405535"/>
    <lineage>
        <taxon>Bacteria</taxon>
        <taxon>Bacillati</taxon>
        <taxon>Bacillota</taxon>
        <taxon>Bacilli</taxon>
        <taxon>Bacillales</taxon>
        <taxon>Bacillaceae</taxon>
        <taxon>Bacillus</taxon>
        <taxon>Bacillus cereus group</taxon>
    </lineage>
</organism>
<name>Y4467_BACC0</name>
<gene>
    <name type="ordered locus">BCAH820_4467</name>
</gene>